<keyword id="KW-1185">Reference proteome</keyword>
<organism>
    <name type="scientific">Synechocystis sp. (strain ATCC 27184 / PCC 6803 / Kazusa)</name>
    <dbReference type="NCBI Taxonomy" id="1111708"/>
    <lineage>
        <taxon>Bacteria</taxon>
        <taxon>Bacillati</taxon>
        <taxon>Cyanobacteriota</taxon>
        <taxon>Cyanophyceae</taxon>
        <taxon>Synechococcales</taxon>
        <taxon>Merismopediaceae</taxon>
        <taxon>Synechocystis</taxon>
    </lineage>
</organism>
<protein>
    <recommendedName>
        <fullName>Uncharacterized protein slr1717</fullName>
    </recommendedName>
</protein>
<sequence length="268" mass="30174">MLESKLENLRQFFGELDRALIAYSGGVDSTLVAKVAYDVLGQNAVAITAVSPSLLPEELEDAQAQAQWIGIAHELVQTNEMANPNYTANPENRCYFCKSELHDTLQPLALALGYNYVIDGVNGDDLRDYRPGIQAAKERGGRSPLAELQISKLEVRQISQLLGLPWWDKPAQPCLSSRFPYGEEITVEKLQRVGRAEIYLRRLGYNQVRVRSEQNLARIELPPEQIQQFVQDVSLGELVQTFQNFGFLYVTLDLEGYQSGKLNRVLTK</sequence>
<name>Y1717_SYNY3</name>
<evidence type="ECO:0000305" key="1"/>
<accession>P73846</accession>
<gene>
    <name type="ordered locus">slr1717</name>
</gene>
<comment type="similarity">
    <text evidence="1">Belongs to the LarE family.</text>
</comment>
<feature type="chain" id="PRO_0000157893" description="Uncharacterized protein slr1717">
    <location>
        <begin position="1"/>
        <end position="268"/>
    </location>
</feature>
<reference key="1">
    <citation type="journal article" date="1996" name="DNA Res.">
        <title>Sequence analysis of the genome of the unicellular cyanobacterium Synechocystis sp. strain PCC6803. II. Sequence determination of the entire genome and assignment of potential protein-coding regions.</title>
        <authorList>
            <person name="Kaneko T."/>
            <person name="Sato S."/>
            <person name="Kotani H."/>
            <person name="Tanaka A."/>
            <person name="Asamizu E."/>
            <person name="Nakamura Y."/>
            <person name="Miyajima N."/>
            <person name="Hirosawa M."/>
            <person name="Sugiura M."/>
            <person name="Sasamoto S."/>
            <person name="Kimura T."/>
            <person name="Hosouchi T."/>
            <person name="Matsuno A."/>
            <person name="Muraki A."/>
            <person name="Nakazaki N."/>
            <person name="Naruo K."/>
            <person name="Okumura S."/>
            <person name="Shimpo S."/>
            <person name="Takeuchi C."/>
            <person name="Wada T."/>
            <person name="Watanabe A."/>
            <person name="Yamada M."/>
            <person name="Yasuda M."/>
            <person name="Tabata S."/>
        </authorList>
    </citation>
    <scope>NUCLEOTIDE SEQUENCE [LARGE SCALE GENOMIC DNA]</scope>
    <source>
        <strain>ATCC 27184 / PCC 6803 / Kazusa</strain>
    </source>
</reference>
<proteinExistence type="inferred from homology"/>
<dbReference type="EMBL" id="BA000022">
    <property type="protein sequence ID" value="BAA17905.1"/>
    <property type="molecule type" value="Genomic_DNA"/>
</dbReference>
<dbReference type="PIR" id="S75043">
    <property type="entry name" value="S75043"/>
</dbReference>
<dbReference type="SMR" id="P73846"/>
<dbReference type="IntAct" id="P73846">
    <property type="interactions" value="1"/>
</dbReference>
<dbReference type="STRING" id="1148.gene:10498774"/>
<dbReference type="PaxDb" id="1148-1652988"/>
<dbReference type="EnsemblBacteria" id="BAA17905">
    <property type="protein sequence ID" value="BAA17905"/>
    <property type="gene ID" value="BAA17905"/>
</dbReference>
<dbReference type="KEGG" id="syn:slr1717"/>
<dbReference type="eggNOG" id="COG1606">
    <property type="taxonomic scope" value="Bacteria"/>
</dbReference>
<dbReference type="InParanoid" id="P73846"/>
<dbReference type="PhylomeDB" id="P73846"/>
<dbReference type="Proteomes" id="UP000001425">
    <property type="component" value="Chromosome"/>
</dbReference>
<dbReference type="GO" id="GO:0016783">
    <property type="term" value="F:sulfurtransferase activity"/>
    <property type="evidence" value="ECO:0007669"/>
    <property type="project" value="InterPro"/>
</dbReference>
<dbReference type="CDD" id="cd01990">
    <property type="entry name" value="LarE-like"/>
    <property type="match status" value="1"/>
</dbReference>
<dbReference type="Gene3D" id="3.40.50.620">
    <property type="entry name" value="HUPs"/>
    <property type="match status" value="1"/>
</dbReference>
<dbReference type="InterPro" id="IPR005232">
    <property type="entry name" value="LarE"/>
</dbReference>
<dbReference type="InterPro" id="IPR022310">
    <property type="entry name" value="NAD/GMP_synthase"/>
</dbReference>
<dbReference type="InterPro" id="IPR052188">
    <property type="entry name" value="Ni-pincer_cofactor_biosynth"/>
</dbReference>
<dbReference type="InterPro" id="IPR014729">
    <property type="entry name" value="Rossmann-like_a/b/a_fold"/>
</dbReference>
<dbReference type="NCBIfam" id="TIGR00268">
    <property type="entry name" value="ATP-dependent sacrificial sulfur transferase LarE"/>
    <property type="match status" value="1"/>
</dbReference>
<dbReference type="PANTHER" id="PTHR43169">
    <property type="entry name" value="EXSB FAMILY PROTEIN"/>
    <property type="match status" value="1"/>
</dbReference>
<dbReference type="PANTHER" id="PTHR43169:SF2">
    <property type="entry name" value="NAD_GMP SYNTHASE DOMAIN-CONTAINING PROTEIN"/>
    <property type="match status" value="1"/>
</dbReference>
<dbReference type="Pfam" id="PF02540">
    <property type="entry name" value="NAD_synthase"/>
    <property type="match status" value="1"/>
</dbReference>
<dbReference type="PIRSF" id="PIRSF006661">
    <property type="entry name" value="PP-lp_UCP006661"/>
    <property type="match status" value="1"/>
</dbReference>
<dbReference type="SUPFAM" id="SSF52402">
    <property type="entry name" value="Adenine nucleotide alpha hydrolases-like"/>
    <property type="match status" value="1"/>
</dbReference>